<comment type="function">
    <text evidence="2">This polymerase possesses two enzymatic activities: DNA synthesis (polymerase) and an exonucleolytic activity that degrades single-stranded DNA in the 3'- to 5'-direction. DNA polymerase I, DNA ligase and the flap endonuclease may be constitutively associated with the PCNA heterotrimer forming a scanning complex able to couple DNA synthesis and Okazaki fragment maturation.</text>
</comment>
<comment type="catalytic activity">
    <reaction>
        <text>DNA(n) + a 2'-deoxyribonucleoside 5'-triphosphate = DNA(n+1) + diphosphate</text>
        <dbReference type="Rhea" id="RHEA:22508"/>
        <dbReference type="Rhea" id="RHEA-COMP:17339"/>
        <dbReference type="Rhea" id="RHEA-COMP:17340"/>
        <dbReference type="ChEBI" id="CHEBI:33019"/>
        <dbReference type="ChEBI" id="CHEBI:61560"/>
        <dbReference type="ChEBI" id="CHEBI:173112"/>
        <dbReference type="EC" id="2.7.7.7"/>
    </reaction>
</comment>
<comment type="activity regulation">
    <text evidence="2">DNA synthesis is stimulated by PCNA heterotrimers.</text>
</comment>
<comment type="subunit">
    <text evidence="2">Interacts with PCNA subunit PCNA2 and weakly with PCNA3.</text>
</comment>
<comment type="interaction">
    <interactant intactId="EBI-15778666">
        <id>P26811</id>
    </interactant>
    <interactant intactId="EBI-9026921">
        <id>Q980N4</id>
        <label>cdc6-1</label>
    </interactant>
    <organismsDiffer>false</organismsDiffer>
    <experiments>4</experiments>
</comment>
<comment type="interaction">
    <interactant intactId="EBI-15778666">
        <id>P26811</id>
    </interactant>
    <interactant intactId="EBI-15778726">
        <id>Q9UXF8</id>
        <label>cdc6-2</label>
    </interactant>
    <organismsDiffer>false</organismsDiffer>
    <experiments>5</experiments>
</comment>
<comment type="interaction">
    <interactant intactId="EBI-15778666">
        <id>P26811</id>
    </interactant>
    <interactant intactId="EBI-9026919">
        <id>Q97WM8</id>
        <label>cdc6-3</label>
    </interactant>
    <organismsDiffer>false</organismsDiffer>
    <experiments>3</experiments>
</comment>
<comment type="similarity">
    <text evidence="3">Belongs to the DNA polymerase type-B family.</text>
</comment>
<reference key="1">
    <citation type="journal article" date="1992" name="Nucleic Acids Res.">
        <title>A DNA polymerase from the archaeon Sulfolobus solfataricus shows sequence similarity to family B DNA polymerases.</title>
        <authorList>
            <person name="Pisani F.M."/>
            <person name="Martino C."/>
            <person name="Rossi M."/>
        </authorList>
    </citation>
    <scope>NUCLEOTIDE SEQUENCE [GENOMIC DNA]</scope>
    <source>
        <strain>DSM 5833 / MT-4</strain>
    </source>
</reference>
<reference key="2">
    <citation type="journal article" date="1996" name="Mol. Microbiol.">
        <title>Organizational characteristics and information content of an archaeal genome: 156 kb of sequence from Sulfolobus solfataricus P2.</title>
        <authorList>
            <person name="Sensen C.W."/>
            <person name="Klenk H.-P."/>
            <person name="Singh R.K."/>
            <person name="Allard G."/>
            <person name="Chan C.C.-Y."/>
            <person name="Liu Q.Y."/>
            <person name="Penny S.L."/>
            <person name="Young F."/>
            <person name="Schenk M.E."/>
            <person name="Gaasterland T."/>
            <person name="Doolittle W.F."/>
            <person name="Ragan M.A."/>
            <person name="Charlebois R.L."/>
        </authorList>
    </citation>
    <scope>NUCLEOTIDE SEQUENCE [GENOMIC DNA]</scope>
    <source>
        <strain>ATCC 35092 / DSM 1617 / JCM 11322 / P2</strain>
    </source>
</reference>
<reference key="3">
    <citation type="journal article" date="2000" name="Genome">
        <title>Gene content and organization of a 281-kbp contig from the genome of the extremely thermophilic archaeon, Sulfolobus solfataricus P2.</title>
        <authorList>
            <person name="Charlebois R.L."/>
            <person name="Singh R.K."/>
            <person name="Chan-Weiher C.C.-Y."/>
            <person name="Allard G."/>
            <person name="Chow C."/>
            <person name="Confalonieri F."/>
            <person name="Curtis B."/>
            <person name="Duguet M."/>
            <person name="Erauso G."/>
            <person name="Faguy D."/>
            <person name="Gaasterland T."/>
            <person name="Garrett R.A."/>
            <person name="Gordon P."/>
            <person name="Jeffries A.C."/>
            <person name="Kozera C."/>
            <person name="Kushwaha N."/>
            <person name="Lafleur E."/>
            <person name="Medina N."/>
            <person name="Peng X."/>
            <person name="Penny S.L."/>
            <person name="She Q."/>
            <person name="St Jean A."/>
            <person name="van der Oost J."/>
            <person name="Young F."/>
            <person name="Zivanovic Y."/>
            <person name="Doolittle W.F."/>
            <person name="Ragan M.A."/>
            <person name="Sensen C.W."/>
        </authorList>
    </citation>
    <scope>NUCLEOTIDE SEQUENCE [LARGE SCALE GENOMIC DNA]</scope>
    <source>
        <strain>ATCC 35092 / DSM 1617 / JCM 11322 / P2</strain>
    </source>
</reference>
<reference key="4">
    <citation type="journal article" date="2001" name="Proc. Natl. Acad. Sci. U.S.A.">
        <title>The complete genome of the crenarchaeon Sulfolobus solfataricus P2.</title>
        <authorList>
            <person name="She Q."/>
            <person name="Singh R.K."/>
            <person name="Confalonieri F."/>
            <person name="Zivanovic Y."/>
            <person name="Allard G."/>
            <person name="Awayez M.J."/>
            <person name="Chan-Weiher C.C.-Y."/>
            <person name="Clausen I.G."/>
            <person name="Curtis B.A."/>
            <person name="De Moors A."/>
            <person name="Erauso G."/>
            <person name="Fletcher C."/>
            <person name="Gordon P.M.K."/>
            <person name="Heikamp-de Jong I."/>
            <person name="Jeffries A.C."/>
            <person name="Kozera C.J."/>
            <person name="Medina N."/>
            <person name="Peng X."/>
            <person name="Thi-Ngoc H.P."/>
            <person name="Redder P."/>
            <person name="Schenk M.E."/>
            <person name="Theriault C."/>
            <person name="Tolstrup N."/>
            <person name="Charlebois R.L."/>
            <person name="Doolittle W.F."/>
            <person name="Duguet M."/>
            <person name="Gaasterland T."/>
            <person name="Garrett R.A."/>
            <person name="Ragan M.A."/>
            <person name="Sensen C.W."/>
            <person name="Van der Oost J."/>
        </authorList>
    </citation>
    <scope>NUCLEOTIDE SEQUENCE [LARGE SCALE GENOMIC DNA]</scope>
    <source>
        <strain>ATCC 35092 / DSM 1617 / JCM 11322 / P2</strain>
    </source>
</reference>
<reference key="5">
    <citation type="journal article" date="2003" name="Mol. Cell">
        <title>A heterotrimeric PCNA in the hyperthermophilic archaeon Sulfolobus solfataricus.</title>
        <authorList>
            <person name="Dionne I."/>
            <person name="Nookala R.K."/>
            <person name="Jackson S.P."/>
            <person name="Doherty A.J."/>
            <person name="Bell S.D."/>
        </authorList>
    </citation>
    <scope>FUNCTION</scope>
    <scope>ACTIVITY REGULATION</scope>
    <scope>INTERACTION WITH PCNA3 AND PCNA2</scope>
    <scope>SUBUNIT</scope>
    <scope>MUTAGENESIS OF 1-MET--ASP-9</scope>
</reference>
<evidence type="ECO:0000256" key="1">
    <source>
        <dbReference type="SAM" id="MobiDB-lite"/>
    </source>
</evidence>
<evidence type="ECO:0000269" key="2">
    <source>
    </source>
</evidence>
<evidence type="ECO:0000305" key="3"/>
<evidence type="ECO:0007829" key="4">
    <source>
        <dbReference type="PDB" id="1S5J"/>
    </source>
</evidence>
<gene>
    <name type="primary">dpo1</name>
    <name type="synonym">polS</name>
    <name type="ordered locus">SSO0552</name>
</gene>
<sequence length="882" mass="101224">MTKQLTLFDIPSSKPAKSEQNTQQSQQSAPVEEKKVVRREWLEEAQENKIYFLLQVDYDGKKGKAVCKLFDKETQKIYALYDNTGHKPYFLVDLEPDKVGKIPKIVRDPSFDHIETVSKIDPYTWNKFKLTKIVVRDPLAVRRLRNDVPKAYEAHIKYFNNYMYDIGLIPGMPYVVKNGKLESVYLSLDEKDVEEIKKAFADSDEMTRQMAVDWLPIFETEIPKIKRVAIDIEVYTPVKGRIPDSQKAEFPIISIALAGSDGLKKVLVLNRNDVNEGSVKLDGISVERFNTEYELLGRFFDILLEYPIVLTFNGDDFDLPYIYFRALKLGYFPEEIPIDVAGKDEAKYLAGLHIDLYKFFFNKAVRNYAFEGKYNEYNLDAVAKALLGTSKVKVDTLISFLDVEKLIEYNFRDAEITLQLTTFNNDLTMKLIVLFSRISRLGIEELTRTEISTWVKNLYYWEHRKRNWLIPLKEEILAKSSNIRTSALIKGKGYKGAVVIDPPAGIFFNITVLDFASLYPSIIRTWNLSYETVDIQQCKKPYEVKDETGEVLHIVCMDRPGITAVITGLLRDFRVKIYKKKAKNPNNSEEQKLLYDVVQRAMKVFINATYGVFGAETFPLYAPAVAESVTALGRYVITSTVKKAREEGLTVLYGDTDSLFLLNPPKNSLENIIKWVKTTFNLDLEVDKTYKFVAFSGLKKNYFGVYQDGKVDIKGMLVKKRNTPEFVKKVFNEVKELMISINSPNDVKEIKRKIVDVVKGSYEKLKNKGYNLDELAFKVMLSKPLDAYKKNTPQHVKAALQLRPFGVNVLPRDIIYYVKVRSKDGVKPVQLAKVTEIDAEKYLEALRSTFEQILRAFGVSWDEIAATMSIDSFFSYPSKGNS</sequence>
<accession>P26811</accession>
<accession>O05707</accession>
<dbReference type="EC" id="2.7.7.7"/>
<dbReference type="EMBL" id="X64466">
    <property type="protein sequence ID" value="CAA45795.1"/>
    <property type="molecule type" value="Genomic_DNA"/>
</dbReference>
<dbReference type="EMBL" id="U92875">
    <property type="protein sequence ID" value="AAB53090.1"/>
    <property type="molecule type" value="Genomic_DNA"/>
</dbReference>
<dbReference type="EMBL" id="Y18930">
    <property type="protein sequence ID" value="CAB57747.1"/>
    <property type="molecule type" value="Genomic_DNA"/>
</dbReference>
<dbReference type="EMBL" id="AE006641">
    <property type="protein sequence ID" value="AAK40869.1"/>
    <property type="molecule type" value="Genomic_DNA"/>
</dbReference>
<dbReference type="PIR" id="F90201">
    <property type="entry name" value="F90201"/>
</dbReference>
<dbReference type="PIR" id="S23019">
    <property type="entry name" value="S23019"/>
</dbReference>
<dbReference type="RefSeq" id="WP_009991059.1">
    <property type="nucleotide sequence ID" value="NC_002754.1"/>
</dbReference>
<dbReference type="PDB" id="1S5J">
    <property type="method" value="X-ray"/>
    <property type="resolution" value="2.40 A"/>
    <property type="chains" value="A=36-882"/>
</dbReference>
<dbReference type="PDBsum" id="1S5J"/>
<dbReference type="SMR" id="P26811"/>
<dbReference type="DIP" id="DIP-48850N"/>
<dbReference type="FunCoup" id="P26811">
    <property type="interactions" value="152"/>
</dbReference>
<dbReference type="IntAct" id="P26811">
    <property type="interactions" value="5"/>
</dbReference>
<dbReference type="STRING" id="273057.SSO0552"/>
<dbReference type="PaxDb" id="273057-SSO0552"/>
<dbReference type="EnsemblBacteria" id="AAK40869">
    <property type="protein sequence ID" value="AAK40869"/>
    <property type="gene ID" value="SSO0552"/>
</dbReference>
<dbReference type="KEGG" id="sso:SSO0552"/>
<dbReference type="PATRIC" id="fig|273057.12.peg.562"/>
<dbReference type="eggNOG" id="arCOG15272">
    <property type="taxonomic scope" value="Archaea"/>
</dbReference>
<dbReference type="HOGENOM" id="CLU_000203_6_0_2"/>
<dbReference type="InParanoid" id="P26811"/>
<dbReference type="PhylomeDB" id="P26811"/>
<dbReference type="BRENDA" id="2.7.7.7">
    <property type="organism ID" value="6163"/>
</dbReference>
<dbReference type="BRENDA" id="3.1.11.1">
    <property type="organism ID" value="6163"/>
</dbReference>
<dbReference type="EvolutionaryTrace" id="P26811"/>
<dbReference type="Proteomes" id="UP000001974">
    <property type="component" value="Chromosome"/>
</dbReference>
<dbReference type="GO" id="GO:0003677">
    <property type="term" value="F:DNA binding"/>
    <property type="evidence" value="ECO:0007669"/>
    <property type="project" value="UniProtKB-KW"/>
</dbReference>
<dbReference type="GO" id="GO:0003887">
    <property type="term" value="F:DNA-directed DNA polymerase activity"/>
    <property type="evidence" value="ECO:0000318"/>
    <property type="project" value="GO_Central"/>
</dbReference>
<dbReference type="GO" id="GO:0004527">
    <property type="term" value="F:exonuclease activity"/>
    <property type="evidence" value="ECO:0007669"/>
    <property type="project" value="UniProtKB-KW"/>
</dbReference>
<dbReference type="GO" id="GO:0000166">
    <property type="term" value="F:nucleotide binding"/>
    <property type="evidence" value="ECO:0007669"/>
    <property type="project" value="InterPro"/>
</dbReference>
<dbReference type="GO" id="GO:0006261">
    <property type="term" value="P:DNA-templated DNA replication"/>
    <property type="evidence" value="ECO:0000318"/>
    <property type="project" value="GO_Central"/>
</dbReference>
<dbReference type="CDD" id="cd05783">
    <property type="entry name" value="DNA_polB_B1_exo"/>
    <property type="match status" value="1"/>
</dbReference>
<dbReference type="CDD" id="cd05530">
    <property type="entry name" value="POLBc_B1"/>
    <property type="match status" value="1"/>
</dbReference>
<dbReference type="FunFam" id="1.10.287.1390:FF:000001">
    <property type="entry name" value="DNA polymerase"/>
    <property type="match status" value="1"/>
</dbReference>
<dbReference type="FunFam" id="1.10.287.690:FF:000011">
    <property type="entry name" value="DNA polymerase"/>
    <property type="match status" value="1"/>
</dbReference>
<dbReference type="FunFam" id="3.30.342.10:FF:000027">
    <property type="entry name" value="DNA polymerase"/>
    <property type="match status" value="1"/>
</dbReference>
<dbReference type="FunFam" id="3.30.420.10:FF:000208">
    <property type="entry name" value="DNA polymerase"/>
    <property type="match status" value="1"/>
</dbReference>
<dbReference type="Gene3D" id="1.10.287.1390">
    <property type="match status" value="2"/>
</dbReference>
<dbReference type="Gene3D" id="3.30.342.10">
    <property type="entry name" value="DNA Polymerase, chain B, domain 1"/>
    <property type="match status" value="1"/>
</dbReference>
<dbReference type="Gene3D" id="1.10.287.690">
    <property type="entry name" value="Helix hairpin bin"/>
    <property type="match status" value="1"/>
</dbReference>
<dbReference type="Gene3D" id="3.90.1600.10">
    <property type="entry name" value="Palm domain of DNA polymerase"/>
    <property type="match status" value="1"/>
</dbReference>
<dbReference type="Gene3D" id="3.30.420.10">
    <property type="entry name" value="Ribonuclease H-like superfamily/Ribonuclease H"/>
    <property type="match status" value="1"/>
</dbReference>
<dbReference type="InterPro" id="IPR006172">
    <property type="entry name" value="DNA-dir_DNA_pol_B"/>
</dbReference>
<dbReference type="InterPro" id="IPR017964">
    <property type="entry name" value="DNA-dir_DNA_pol_B_CS"/>
</dbReference>
<dbReference type="InterPro" id="IPR006133">
    <property type="entry name" value="DNA-dir_DNA_pol_B_exonuc"/>
</dbReference>
<dbReference type="InterPro" id="IPR006134">
    <property type="entry name" value="DNA-dir_DNA_pol_B_multi_dom"/>
</dbReference>
<dbReference type="InterPro" id="IPR043502">
    <property type="entry name" value="DNA/RNA_pol_sf"/>
</dbReference>
<dbReference type="InterPro" id="IPR023211">
    <property type="entry name" value="DNA_pol_palm_dom_sf"/>
</dbReference>
<dbReference type="InterPro" id="IPR050240">
    <property type="entry name" value="DNA_pol_type-B"/>
</dbReference>
<dbReference type="InterPro" id="IPR012337">
    <property type="entry name" value="RNaseH-like_sf"/>
</dbReference>
<dbReference type="InterPro" id="IPR036397">
    <property type="entry name" value="RNaseH_sf"/>
</dbReference>
<dbReference type="NCBIfam" id="NF004415">
    <property type="entry name" value="PRK05761.1-1"/>
    <property type="match status" value="1"/>
</dbReference>
<dbReference type="NCBIfam" id="NF004417">
    <property type="entry name" value="PRK05761.1-3"/>
    <property type="match status" value="1"/>
</dbReference>
<dbReference type="PANTHER" id="PTHR10322:SF20">
    <property type="entry name" value="DNA POLYMERASE 1"/>
    <property type="match status" value="1"/>
</dbReference>
<dbReference type="PANTHER" id="PTHR10322">
    <property type="entry name" value="DNA POLYMERASE CATALYTIC SUBUNIT"/>
    <property type="match status" value="1"/>
</dbReference>
<dbReference type="Pfam" id="PF00136">
    <property type="entry name" value="DNA_pol_B"/>
    <property type="match status" value="1"/>
</dbReference>
<dbReference type="Pfam" id="PF03104">
    <property type="entry name" value="DNA_pol_B_exo1"/>
    <property type="match status" value="1"/>
</dbReference>
<dbReference type="PRINTS" id="PR00106">
    <property type="entry name" value="DNAPOLB"/>
</dbReference>
<dbReference type="SMART" id="SM00486">
    <property type="entry name" value="POLBc"/>
    <property type="match status" value="1"/>
</dbReference>
<dbReference type="SUPFAM" id="SSF56672">
    <property type="entry name" value="DNA/RNA polymerases"/>
    <property type="match status" value="1"/>
</dbReference>
<dbReference type="SUPFAM" id="SSF53098">
    <property type="entry name" value="Ribonuclease H-like"/>
    <property type="match status" value="1"/>
</dbReference>
<dbReference type="PROSITE" id="PS00116">
    <property type="entry name" value="DNA_POLYMERASE_B"/>
    <property type="match status" value="1"/>
</dbReference>
<keyword id="KW-0002">3D-structure</keyword>
<keyword id="KW-0235">DNA replication</keyword>
<keyword id="KW-0238">DNA-binding</keyword>
<keyword id="KW-0239">DNA-directed DNA polymerase</keyword>
<keyword id="KW-0269">Exonuclease</keyword>
<keyword id="KW-0378">Hydrolase</keyword>
<keyword id="KW-0540">Nuclease</keyword>
<keyword id="KW-0548">Nucleotidyltransferase</keyword>
<keyword id="KW-1185">Reference proteome</keyword>
<keyword id="KW-0808">Transferase</keyword>
<protein>
    <recommendedName>
        <fullName>DNA polymerase 1</fullName>
        <ecNumber>2.7.7.7</ecNumber>
    </recommendedName>
    <alternativeName>
        <fullName>DNA polymerase I</fullName>
    </alternativeName>
    <alternativeName>
        <fullName>Pol B1</fullName>
    </alternativeName>
</protein>
<feature type="chain" id="PRO_0000046483" description="DNA polymerase 1">
    <location>
        <begin position="1"/>
        <end position="882"/>
    </location>
</feature>
<feature type="region of interest" description="Disordered" evidence="1">
    <location>
        <begin position="1"/>
        <end position="31"/>
    </location>
</feature>
<feature type="compositionally biased region" description="Polar residues" evidence="1">
    <location>
        <begin position="18"/>
        <end position="29"/>
    </location>
</feature>
<feature type="mutagenesis site" description="No interaction with PCNA subunit PCNA2, DNA polymerase no longer stimulated by PCNA heterotrimers." evidence="2">
    <location>
        <begin position="1"/>
        <end position="9"/>
    </location>
</feature>
<feature type="sequence conflict" description="In Ref. 1; CAA45795." evidence="3" ref="1">
    <original>L</original>
    <variation>H</variation>
    <location>
        <position position="139"/>
    </location>
</feature>
<feature type="sequence conflict" description="In Ref. 1; CAA45795." evidence="3" ref="1">
    <original>A</original>
    <variation>R</variation>
    <location>
        <position position="624"/>
    </location>
</feature>
<feature type="strand" evidence="4">
    <location>
        <begin position="50"/>
        <end position="59"/>
    </location>
</feature>
<feature type="turn" evidence="4">
    <location>
        <begin position="60"/>
        <end position="63"/>
    </location>
</feature>
<feature type="strand" evidence="4">
    <location>
        <begin position="64"/>
        <end position="71"/>
    </location>
</feature>
<feature type="turn" evidence="4">
    <location>
        <begin position="72"/>
        <end position="75"/>
    </location>
</feature>
<feature type="strand" evidence="4">
    <location>
        <begin position="76"/>
        <end position="81"/>
    </location>
</feature>
<feature type="strand" evidence="4">
    <location>
        <begin position="89"/>
        <end position="94"/>
    </location>
</feature>
<feature type="helix" evidence="4">
    <location>
        <begin position="96"/>
        <end position="99"/>
    </location>
</feature>
<feature type="helix" evidence="4">
    <location>
        <begin position="103"/>
        <end position="106"/>
    </location>
</feature>
<feature type="strand" evidence="4">
    <location>
        <begin position="111"/>
        <end position="120"/>
    </location>
</feature>
<feature type="turn" evidence="4">
    <location>
        <begin position="122"/>
        <end position="124"/>
    </location>
</feature>
<feature type="strand" evidence="4">
    <location>
        <begin position="127"/>
        <end position="137"/>
    </location>
</feature>
<feature type="helix" evidence="4">
    <location>
        <begin position="138"/>
        <end position="144"/>
    </location>
</feature>
<feature type="strand" evidence="4">
    <location>
        <begin position="147"/>
        <end position="149"/>
    </location>
</feature>
<feature type="strand" evidence="4">
    <location>
        <begin position="151"/>
        <end position="153"/>
    </location>
</feature>
<feature type="helix" evidence="4">
    <location>
        <begin position="158"/>
        <end position="166"/>
    </location>
</feature>
<feature type="strand" evidence="4">
    <location>
        <begin position="172"/>
        <end position="177"/>
    </location>
</feature>
<feature type="strand" evidence="4">
    <location>
        <begin position="180"/>
        <end position="183"/>
    </location>
</feature>
<feature type="helix" evidence="4">
    <location>
        <begin position="190"/>
        <end position="199"/>
    </location>
</feature>
<feature type="turn" evidence="4">
    <location>
        <begin position="200"/>
        <end position="202"/>
    </location>
</feature>
<feature type="helix" evidence="4">
    <location>
        <begin position="205"/>
        <end position="214"/>
    </location>
</feature>
<feature type="helix" evidence="4">
    <location>
        <begin position="216"/>
        <end position="219"/>
    </location>
</feature>
<feature type="strand" evidence="4">
    <location>
        <begin position="227"/>
        <end position="234"/>
    </location>
</feature>
<feature type="strand" evidence="4">
    <location>
        <begin position="237"/>
        <end position="240"/>
    </location>
</feature>
<feature type="turn" evidence="4">
    <location>
        <begin position="245"/>
        <end position="247"/>
    </location>
</feature>
<feature type="strand" evidence="4">
    <location>
        <begin position="252"/>
        <end position="259"/>
    </location>
</feature>
<feature type="strand" evidence="4">
    <location>
        <begin position="264"/>
        <end position="269"/>
    </location>
</feature>
<feature type="strand" evidence="4">
    <location>
        <begin position="279"/>
        <end position="281"/>
    </location>
</feature>
<feature type="strand" evidence="4">
    <location>
        <begin position="284"/>
        <end position="291"/>
    </location>
</feature>
<feature type="helix" evidence="4">
    <location>
        <begin position="292"/>
        <end position="303"/>
    </location>
</feature>
<feature type="strand" evidence="4">
    <location>
        <begin position="307"/>
        <end position="313"/>
    </location>
</feature>
<feature type="turn" evidence="4">
    <location>
        <begin position="314"/>
        <end position="317"/>
    </location>
</feature>
<feature type="helix" evidence="4">
    <location>
        <begin position="318"/>
        <end position="327"/>
    </location>
</feature>
<feature type="turn" evidence="4">
    <location>
        <begin position="328"/>
        <end position="330"/>
    </location>
</feature>
<feature type="helix" evidence="4">
    <location>
        <begin position="333"/>
        <end position="335"/>
    </location>
</feature>
<feature type="strand" evidence="4">
    <location>
        <begin position="337"/>
        <end position="339"/>
    </location>
</feature>
<feature type="strand" evidence="4">
    <location>
        <begin position="351"/>
        <end position="355"/>
    </location>
</feature>
<feature type="helix" evidence="4">
    <location>
        <begin position="356"/>
        <end position="360"/>
    </location>
</feature>
<feature type="helix" evidence="4">
    <location>
        <begin position="363"/>
        <end position="368"/>
    </location>
</feature>
<feature type="helix" evidence="4">
    <location>
        <begin position="379"/>
        <end position="387"/>
    </location>
</feature>
<feature type="turn" evidence="4">
    <location>
        <begin position="398"/>
        <end position="400"/>
    </location>
</feature>
<feature type="helix" evidence="4">
    <location>
        <begin position="403"/>
        <end position="419"/>
    </location>
</feature>
<feature type="turn" evidence="4">
    <location>
        <begin position="420"/>
        <end position="422"/>
    </location>
</feature>
<feature type="helix" evidence="4">
    <location>
        <begin position="423"/>
        <end position="439"/>
    </location>
</feature>
<feature type="helix" evidence="4">
    <location>
        <begin position="443"/>
        <end position="446"/>
    </location>
</feature>
<feature type="helix" evidence="4">
    <location>
        <begin position="451"/>
        <end position="466"/>
    </location>
</feature>
<feature type="helix" evidence="4">
    <location>
        <begin position="473"/>
        <end position="478"/>
    </location>
</feature>
<feature type="strand" evidence="4">
    <location>
        <begin position="504"/>
        <end position="515"/>
    </location>
</feature>
<feature type="helix" evidence="4">
    <location>
        <begin position="518"/>
        <end position="525"/>
    </location>
</feature>
<feature type="turn" evidence="4">
    <location>
        <begin position="530"/>
        <end position="532"/>
    </location>
</feature>
<feature type="strand" evidence="4">
    <location>
        <begin position="547"/>
        <end position="549"/>
    </location>
</feature>
<feature type="strand" evidence="4">
    <location>
        <begin position="553"/>
        <end position="555"/>
    </location>
</feature>
<feature type="helix" evidence="4">
    <location>
        <begin position="562"/>
        <end position="576"/>
    </location>
</feature>
<feature type="helix" evidence="4">
    <location>
        <begin position="578"/>
        <end position="582"/>
    </location>
</feature>
<feature type="helix" evidence="4">
    <location>
        <begin position="589"/>
        <end position="614"/>
    </location>
</feature>
<feature type="helix" evidence="4">
    <location>
        <begin position="623"/>
        <end position="645"/>
    </location>
</feature>
<feature type="turn" evidence="4">
    <location>
        <begin position="646"/>
        <end position="648"/>
    </location>
</feature>
<feature type="strand" evidence="4">
    <location>
        <begin position="651"/>
        <end position="655"/>
    </location>
</feature>
<feature type="strand" evidence="4">
    <location>
        <begin position="658"/>
        <end position="663"/>
    </location>
</feature>
<feature type="helix" evidence="4">
    <location>
        <begin position="666"/>
        <end position="679"/>
    </location>
</feature>
<feature type="strand" evidence="4">
    <location>
        <begin position="684"/>
        <end position="695"/>
    </location>
</feature>
<feature type="strand" evidence="4">
    <location>
        <begin position="702"/>
        <end position="705"/>
    </location>
</feature>
<feature type="strand" evidence="4">
    <location>
        <begin position="707"/>
        <end position="709"/>
    </location>
</feature>
<feature type="strand" evidence="4">
    <location>
        <begin position="713"/>
        <end position="715"/>
    </location>
</feature>
<feature type="helix" evidence="4">
    <location>
        <begin position="730"/>
        <end position="739"/>
    </location>
</feature>
<feature type="helix" evidence="4">
    <location>
        <begin position="749"/>
        <end position="762"/>
    </location>
</feature>
<feature type="helix" evidence="4">
    <location>
        <begin position="843"/>
        <end position="847"/>
    </location>
</feature>
<feature type="helix" evidence="4">
    <location>
        <begin position="853"/>
        <end position="857"/>
    </location>
</feature>
<proteinExistence type="evidence at protein level"/>
<name>DPOL1_SACS2</name>
<organism>
    <name type="scientific">Saccharolobus solfataricus (strain ATCC 35092 / DSM 1617 / JCM 11322 / P2)</name>
    <name type="common">Sulfolobus solfataricus</name>
    <dbReference type="NCBI Taxonomy" id="273057"/>
    <lineage>
        <taxon>Archaea</taxon>
        <taxon>Thermoproteota</taxon>
        <taxon>Thermoprotei</taxon>
        <taxon>Sulfolobales</taxon>
        <taxon>Sulfolobaceae</taxon>
        <taxon>Saccharolobus</taxon>
    </lineage>
</organism>